<reference key="1">
    <citation type="journal article" date="1998" name="DNA Res.">
        <title>Structural analysis of Arabidopsis thaliana chromosome 5. VIII. Sequence features of the regions of 1,081,958 bp covered by seventeen physically assigned P1 and TAC clones.</title>
        <authorList>
            <person name="Asamizu E."/>
            <person name="Sato S."/>
            <person name="Kaneko T."/>
            <person name="Nakamura Y."/>
            <person name="Kotani H."/>
            <person name="Miyajima N."/>
            <person name="Tabata S."/>
        </authorList>
    </citation>
    <scope>NUCLEOTIDE SEQUENCE [LARGE SCALE GENOMIC DNA]</scope>
    <source>
        <strain>cv. Columbia</strain>
    </source>
</reference>
<reference key="2">
    <citation type="journal article" date="2017" name="Plant J.">
        <title>Araport11: a complete reannotation of the Arabidopsis thaliana reference genome.</title>
        <authorList>
            <person name="Cheng C.Y."/>
            <person name="Krishnakumar V."/>
            <person name="Chan A.P."/>
            <person name="Thibaud-Nissen F."/>
            <person name="Schobel S."/>
            <person name="Town C.D."/>
        </authorList>
    </citation>
    <scope>GENOME REANNOTATION</scope>
    <source>
        <strain>cv. Columbia</strain>
    </source>
</reference>
<reference key="3">
    <citation type="submission" date="2002-03" db="EMBL/GenBank/DDBJ databases">
        <title>Full-length cDNA from Arabidopsis thaliana.</title>
        <authorList>
            <person name="Brover V.V."/>
            <person name="Troukhan M.E."/>
            <person name="Alexandrov N.A."/>
            <person name="Lu Y.-P."/>
            <person name="Flavell R.B."/>
            <person name="Feldmann K.A."/>
        </authorList>
    </citation>
    <scope>NUCLEOTIDE SEQUENCE [LARGE SCALE MRNA]</scope>
</reference>
<reference key="4">
    <citation type="submission" date="2004-09" db="EMBL/GenBank/DDBJ databases">
        <title>Large-scale analysis of RIKEN Arabidopsis full-length (RAFL) cDNAs.</title>
        <authorList>
            <person name="Totoki Y."/>
            <person name="Seki M."/>
            <person name="Ishida J."/>
            <person name="Nakajima M."/>
            <person name="Enju A."/>
            <person name="Kamiya A."/>
            <person name="Narusaka M."/>
            <person name="Shin-i T."/>
            <person name="Nakagawa M."/>
            <person name="Sakamoto N."/>
            <person name="Oishi K."/>
            <person name="Kohara Y."/>
            <person name="Kobayashi M."/>
            <person name="Toyoda A."/>
            <person name="Sakaki Y."/>
            <person name="Sakurai T."/>
            <person name="Iida K."/>
            <person name="Akiyama K."/>
            <person name="Satou M."/>
            <person name="Toyoda T."/>
            <person name="Konagaya A."/>
            <person name="Carninci P."/>
            <person name="Kawai J."/>
            <person name="Hayashizaki Y."/>
            <person name="Shinozaki K."/>
        </authorList>
    </citation>
    <scope>NUCLEOTIDE SEQUENCE [LARGE SCALE MRNA]</scope>
    <source>
        <strain>cv. Columbia</strain>
    </source>
</reference>
<reference key="5">
    <citation type="submission" date="2006-02" db="EMBL/GenBank/DDBJ databases">
        <title>Arabidopsis ORF clones.</title>
        <authorList>
            <person name="Shinn P."/>
            <person name="Chen H."/>
            <person name="Kim C.J."/>
            <person name="Ecker J.R."/>
        </authorList>
    </citation>
    <scope>NUCLEOTIDE SEQUENCE [LARGE SCALE MRNA]</scope>
    <source>
        <strain>cv. Columbia</strain>
    </source>
</reference>
<reference key="6">
    <citation type="journal article" date="2006" name="Proc. Natl. Acad. Sci. U.S.A.">
        <title>An endogenous peptide signal in Arabidopsis activates components of the innate immune response.</title>
        <authorList>
            <person name="Huffaker A."/>
            <person name="Pearce G."/>
            <person name="Ryan C.A."/>
        </authorList>
    </citation>
    <scope>GENE FAMILY</scope>
    <scope>NOMENCLATURE</scope>
</reference>
<dbReference type="EMBL" id="AB016893">
    <property type="protein sequence ID" value="BAB09420.1"/>
    <property type="status" value="ALT_SEQ"/>
    <property type="molecule type" value="Genomic_DNA"/>
</dbReference>
<dbReference type="EMBL" id="CP002688">
    <property type="protein sequence ID" value="AED91476.1"/>
    <property type="molecule type" value="Genomic_DNA"/>
</dbReference>
<dbReference type="EMBL" id="AY086181">
    <property type="protein sequence ID" value="AAM64260.1"/>
    <property type="molecule type" value="mRNA"/>
</dbReference>
<dbReference type="EMBL" id="AK176126">
    <property type="protein sequence ID" value="BAD43889.1"/>
    <property type="molecule type" value="mRNA"/>
</dbReference>
<dbReference type="EMBL" id="BT024633">
    <property type="protein sequence ID" value="ABD57458.1"/>
    <property type="molecule type" value="mRNA"/>
</dbReference>
<dbReference type="RefSeq" id="NP_568224.1">
    <property type="nucleotide sequence ID" value="NM_121036.3"/>
</dbReference>
<dbReference type="FunCoup" id="Q8LD63">
    <property type="interactions" value="23"/>
</dbReference>
<dbReference type="STRING" id="3702.Q8LD63"/>
<dbReference type="iPTMnet" id="Q8LD63"/>
<dbReference type="PaxDb" id="3702-AT5G09990.1"/>
<dbReference type="ProteomicsDB" id="236765"/>
<dbReference type="EnsemblPlants" id="AT5G09990.1">
    <property type="protein sequence ID" value="AT5G09990.1"/>
    <property type="gene ID" value="AT5G09990"/>
</dbReference>
<dbReference type="GeneID" id="830860"/>
<dbReference type="Gramene" id="AT5G09990.1">
    <property type="protein sequence ID" value="AT5G09990.1"/>
    <property type="gene ID" value="AT5G09990"/>
</dbReference>
<dbReference type="KEGG" id="ath:AT5G09990"/>
<dbReference type="Araport" id="AT5G09990"/>
<dbReference type="TAIR" id="AT5G09990">
    <property type="gene designation" value="PROPEP5"/>
</dbReference>
<dbReference type="HOGENOM" id="CLU_2530636_0_0_1"/>
<dbReference type="InParanoid" id="Q8LD63"/>
<dbReference type="OMA" id="MQKESDN"/>
<dbReference type="OrthoDB" id="1064819at2759"/>
<dbReference type="PRO" id="PR:Q8LD63"/>
<dbReference type="Proteomes" id="UP000006548">
    <property type="component" value="Chromosome 5"/>
</dbReference>
<dbReference type="ExpressionAtlas" id="Q8LD63">
    <property type="expression patterns" value="baseline and differential"/>
</dbReference>
<dbReference type="GO" id="GO:0045087">
    <property type="term" value="P:innate immune response"/>
    <property type="evidence" value="ECO:0007669"/>
    <property type="project" value="InterPro"/>
</dbReference>
<dbReference type="InterPro" id="IPR035176">
    <property type="entry name" value="PEP"/>
</dbReference>
<dbReference type="Pfam" id="PF17232">
    <property type="entry name" value="Pep1_7"/>
    <property type="match status" value="1"/>
</dbReference>
<sequence>MQQERDHKRDCCKLMPQTVKAFFKCLRFRRSSSSSSDMVKARARNEEKEEPSSIETSTRSLNVMRKGIRKQPVSSGKRGGVNDYDM</sequence>
<proteinExistence type="inferred from homology"/>
<protein>
    <recommendedName>
        <fullName>Elicitor peptide 5</fullName>
    </recommendedName>
</protein>
<evidence type="ECO:0000250" key="1"/>
<evidence type="ECO:0000256" key="2">
    <source>
        <dbReference type="SAM" id="MobiDB-lite"/>
    </source>
</evidence>
<evidence type="ECO:0000305" key="3"/>
<keyword id="KW-0611">Plant defense</keyword>
<keyword id="KW-1185">Reference proteome</keyword>
<accession>Q8LD63</accession>
<accession>Q9FIA8</accession>
<organism>
    <name type="scientific">Arabidopsis thaliana</name>
    <name type="common">Mouse-ear cress</name>
    <dbReference type="NCBI Taxonomy" id="3702"/>
    <lineage>
        <taxon>Eukaryota</taxon>
        <taxon>Viridiplantae</taxon>
        <taxon>Streptophyta</taxon>
        <taxon>Embryophyta</taxon>
        <taxon>Tracheophyta</taxon>
        <taxon>Spermatophyta</taxon>
        <taxon>Magnoliopsida</taxon>
        <taxon>eudicotyledons</taxon>
        <taxon>Gunneridae</taxon>
        <taxon>Pentapetalae</taxon>
        <taxon>rosids</taxon>
        <taxon>malvids</taxon>
        <taxon>Brassicales</taxon>
        <taxon>Brassicaceae</taxon>
        <taxon>Camelineae</taxon>
        <taxon>Arabidopsis</taxon>
    </lineage>
</organism>
<feature type="propeptide" id="PRO_0000249087" evidence="1">
    <location>
        <begin position="1"/>
        <end position="59"/>
    </location>
</feature>
<feature type="peptide" id="PRO_0000249088" description="Elicitor peptide 5">
    <location>
        <begin position="60"/>
        <end position="86"/>
    </location>
</feature>
<feature type="region of interest" description="Disordered" evidence="2">
    <location>
        <begin position="31"/>
        <end position="86"/>
    </location>
</feature>
<feature type="compositionally biased region" description="Basic and acidic residues" evidence="2">
    <location>
        <begin position="39"/>
        <end position="51"/>
    </location>
</feature>
<feature type="site" description="Required for ligand-receptor interaction" evidence="1">
    <location>
        <position position="76"/>
    </location>
</feature>
<gene>
    <name type="primary">PEP5</name>
    <name type="synonym">PROPEP5</name>
    <name type="ordered locus">At5g09990</name>
    <name type="ORF">MYH9.21</name>
</gene>
<comment type="function">
    <text evidence="1">Elicitor of plant defense.</text>
</comment>
<comment type="similarity">
    <text evidence="3">Belongs to the brassicaceae elicitor peptide family.</text>
</comment>
<comment type="sequence caution" evidence="3">
    <conflict type="erroneous gene model prediction">
        <sequence resource="EMBL-CDS" id="BAB09420"/>
    </conflict>
</comment>
<name>PEP5_ARATH</name>